<accession>A1S2T9</accession>
<protein>
    <recommendedName>
        <fullName evidence="1">Ribosomal protein uS12 methylthiotransferase RimO</fullName>
        <shortName evidence="1">uS12 MTTase</shortName>
        <shortName evidence="1">uS12 methylthiotransferase</shortName>
        <ecNumber evidence="1">2.8.4.4</ecNumber>
    </recommendedName>
    <alternativeName>
        <fullName evidence="1">Ribosomal protein uS12 (aspartate-C(3))-methylthiotransferase</fullName>
    </alternativeName>
    <alternativeName>
        <fullName evidence="1">Ribosome maturation factor RimO</fullName>
    </alternativeName>
</protein>
<dbReference type="EC" id="2.8.4.4" evidence="1"/>
<dbReference type="EMBL" id="CP000507">
    <property type="protein sequence ID" value="ABL98695.1"/>
    <property type="status" value="ALT_INIT"/>
    <property type="molecule type" value="Genomic_DNA"/>
</dbReference>
<dbReference type="RefSeq" id="WP_041409650.1">
    <property type="nucleotide sequence ID" value="NC_008700.1"/>
</dbReference>
<dbReference type="SMR" id="A1S2T9"/>
<dbReference type="STRING" id="326297.Sama_0485"/>
<dbReference type="KEGG" id="saz:Sama_0485"/>
<dbReference type="eggNOG" id="COG0621">
    <property type="taxonomic scope" value="Bacteria"/>
</dbReference>
<dbReference type="HOGENOM" id="CLU_018697_0_0_6"/>
<dbReference type="OrthoDB" id="9805215at2"/>
<dbReference type="Proteomes" id="UP000009175">
    <property type="component" value="Chromosome"/>
</dbReference>
<dbReference type="GO" id="GO:0005829">
    <property type="term" value="C:cytosol"/>
    <property type="evidence" value="ECO:0007669"/>
    <property type="project" value="TreeGrafter"/>
</dbReference>
<dbReference type="GO" id="GO:0051539">
    <property type="term" value="F:4 iron, 4 sulfur cluster binding"/>
    <property type="evidence" value="ECO:0007669"/>
    <property type="project" value="UniProtKB-UniRule"/>
</dbReference>
<dbReference type="GO" id="GO:0035599">
    <property type="term" value="F:aspartic acid methylthiotransferase activity"/>
    <property type="evidence" value="ECO:0007669"/>
    <property type="project" value="TreeGrafter"/>
</dbReference>
<dbReference type="GO" id="GO:0046872">
    <property type="term" value="F:metal ion binding"/>
    <property type="evidence" value="ECO:0007669"/>
    <property type="project" value="UniProtKB-KW"/>
</dbReference>
<dbReference type="GO" id="GO:0103039">
    <property type="term" value="F:protein methylthiotransferase activity"/>
    <property type="evidence" value="ECO:0007669"/>
    <property type="project" value="UniProtKB-EC"/>
</dbReference>
<dbReference type="GO" id="GO:0006400">
    <property type="term" value="P:tRNA modification"/>
    <property type="evidence" value="ECO:0007669"/>
    <property type="project" value="InterPro"/>
</dbReference>
<dbReference type="CDD" id="cd01335">
    <property type="entry name" value="Radical_SAM"/>
    <property type="match status" value="1"/>
</dbReference>
<dbReference type="FunFam" id="2.40.50.140:FF:000060">
    <property type="entry name" value="Ribosomal protein S12 methylthiotransferase RimO"/>
    <property type="match status" value="1"/>
</dbReference>
<dbReference type="FunFam" id="3.40.50.12160:FF:000002">
    <property type="entry name" value="Ribosomal protein S12 methylthiotransferase RimO"/>
    <property type="match status" value="1"/>
</dbReference>
<dbReference type="FunFam" id="3.80.30.20:FF:000001">
    <property type="entry name" value="tRNA-2-methylthio-N(6)-dimethylallyladenosine synthase 2"/>
    <property type="match status" value="1"/>
</dbReference>
<dbReference type="Gene3D" id="3.40.50.12160">
    <property type="entry name" value="Methylthiotransferase, N-terminal domain"/>
    <property type="match status" value="1"/>
</dbReference>
<dbReference type="Gene3D" id="2.40.50.140">
    <property type="entry name" value="Nucleic acid-binding proteins"/>
    <property type="match status" value="1"/>
</dbReference>
<dbReference type="Gene3D" id="3.80.30.20">
    <property type="entry name" value="tm_1862 like domain"/>
    <property type="match status" value="1"/>
</dbReference>
<dbReference type="HAMAP" id="MF_01865">
    <property type="entry name" value="MTTase_RimO"/>
    <property type="match status" value="1"/>
</dbReference>
<dbReference type="InterPro" id="IPR006638">
    <property type="entry name" value="Elp3/MiaA/NifB-like_rSAM"/>
</dbReference>
<dbReference type="InterPro" id="IPR005839">
    <property type="entry name" value="Methylthiotransferase"/>
</dbReference>
<dbReference type="InterPro" id="IPR020612">
    <property type="entry name" value="Methylthiotransferase_CS"/>
</dbReference>
<dbReference type="InterPro" id="IPR013848">
    <property type="entry name" value="Methylthiotransferase_N"/>
</dbReference>
<dbReference type="InterPro" id="IPR038135">
    <property type="entry name" value="Methylthiotransferase_N_sf"/>
</dbReference>
<dbReference type="InterPro" id="IPR012340">
    <property type="entry name" value="NA-bd_OB-fold"/>
</dbReference>
<dbReference type="InterPro" id="IPR005840">
    <property type="entry name" value="Ribosomal_uS12_MeSTrfase_RimO"/>
</dbReference>
<dbReference type="InterPro" id="IPR007197">
    <property type="entry name" value="rSAM"/>
</dbReference>
<dbReference type="InterPro" id="IPR023404">
    <property type="entry name" value="rSAM_horseshoe"/>
</dbReference>
<dbReference type="InterPro" id="IPR002792">
    <property type="entry name" value="TRAM_dom"/>
</dbReference>
<dbReference type="NCBIfam" id="TIGR01125">
    <property type="entry name" value="30S ribosomal protein S12 methylthiotransferase RimO"/>
    <property type="match status" value="1"/>
</dbReference>
<dbReference type="NCBIfam" id="TIGR00089">
    <property type="entry name" value="MiaB/RimO family radical SAM methylthiotransferase"/>
    <property type="match status" value="1"/>
</dbReference>
<dbReference type="PANTHER" id="PTHR43837">
    <property type="entry name" value="RIBOSOMAL PROTEIN S12 METHYLTHIOTRANSFERASE RIMO"/>
    <property type="match status" value="1"/>
</dbReference>
<dbReference type="PANTHER" id="PTHR43837:SF1">
    <property type="entry name" value="RIBOSOMAL PROTEIN US12 METHYLTHIOTRANSFERASE RIMO"/>
    <property type="match status" value="1"/>
</dbReference>
<dbReference type="Pfam" id="PF04055">
    <property type="entry name" value="Radical_SAM"/>
    <property type="match status" value="1"/>
</dbReference>
<dbReference type="Pfam" id="PF18693">
    <property type="entry name" value="TRAM_2"/>
    <property type="match status" value="1"/>
</dbReference>
<dbReference type="Pfam" id="PF00919">
    <property type="entry name" value="UPF0004"/>
    <property type="match status" value="1"/>
</dbReference>
<dbReference type="SFLD" id="SFLDG01082">
    <property type="entry name" value="B12-binding_domain_containing"/>
    <property type="match status" value="1"/>
</dbReference>
<dbReference type="SFLD" id="SFLDG01061">
    <property type="entry name" value="methylthiotransferase"/>
    <property type="match status" value="1"/>
</dbReference>
<dbReference type="SFLD" id="SFLDF00274">
    <property type="entry name" value="ribosomal_protein_S12_methylth"/>
    <property type="match status" value="1"/>
</dbReference>
<dbReference type="SMART" id="SM00729">
    <property type="entry name" value="Elp3"/>
    <property type="match status" value="1"/>
</dbReference>
<dbReference type="SUPFAM" id="SSF102114">
    <property type="entry name" value="Radical SAM enzymes"/>
    <property type="match status" value="1"/>
</dbReference>
<dbReference type="PROSITE" id="PS51449">
    <property type="entry name" value="MTTASE_N"/>
    <property type="match status" value="1"/>
</dbReference>
<dbReference type="PROSITE" id="PS01278">
    <property type="entry name" value="MTTASE_RADICAL"/>
    <property type="match status" value="1"/>
</dbReference>
<dbReference type="PROSITE" id="PS51918">
    <property type="entry name" value="RADICAL_SAM"/>
    <property type="match status" value="1"/>
</dbReference>
<dbReference type="PROSITE" id="PS50926">
    <property type="entry name" value="TRAM"/>
    <property type="match status" value="1"/>
</dbReference>
<feature type="chain" id="PRO_0000374999" description="Ribosomal protein uS12 methylthiotransferase RimO">
    <location>
        <begin position="1"/>
        <end position="474"/>
    </location>
</feature>
<feature type="domain" description="MTTase N-terminal" evidence="1">
    <location>
        <begin position="37"/>
        <end position="147"/>
    </location>
</feature>
<feature type="domain" description="Radical SAM core" evidence="2">
    <location>
        <begin position="165"/>
        <end position="402"/>
    </location>
</feature>
<feature type="domain" description="TRAM" evidence="1">
    <location>
        <begin position="405"/>
        <end position="471"/>
    </location>
</feature>
<feature type="binding site" evidence="1">
    <location>
        <position position="46"/>
    </location>
    <ligand>
        <name>[4Fe-4S] cluster</name>
        <dbReference type="ChEBI" id="CHEBI:49883"/>
        <label>1</label>
    </ligand>
</feature>
<feature type="binding site" evidence="1">
    <location>
        <position position="82"/>
    </location>
    <ligand>
        <name>[4Fe-4S] cluster</name>
        <dbReference type="ChEBI" id="CHEBI:49883"/>
        <label>1</label>
    </ligand>
</feature>
<feature type="binding site" evidence="1">
    <location>
        <position position="111"/>
    </location>
    <ligand>
        <name>[4Fe-4S] cluster</name>
        <dbReference type="ChEBI" id="CHEBI:49883"/>
        <label>1</label>
    </ligand>
</feature>
<feature type="binding site" evidence="1">
    <location>
        <position position="179"/>
    </location>
    <ligand>
        <name>[4Fe-4S] cluster</name>
        <dbReference type="ChEBI" id="CHEBI:49883"/>
        <label>2</label>
        <note>4Fe-4S-S-AdoMet</note>
    </ligand>
</feature>
<feature type="binding site" evidence="1">
    <location>
        <position position="183"/>
    </location>
    <ligand>
        <name>[4Fe-4S] cluster</name>
        <dbReference type="ChEBI" id="CHEBI:49883"/>
        <label>2</label>
        <note>4Fe-4S-S-AdoMet</note>
    </ligand>
</feature>
<feature type="binding site" evidence="1">
    <location>
        <position position="186"/>
    </location>
    <ligand>
        <name>[4Fe-4S] cluster</name>
        <dbReference type="ChEBI" id="CHEBI:49883"/>
        <label>2</label>
        <note>4Fe-4S-S-AdoMet</note>
    </ligand>
</feature>
<sequence>MNKTVETFDPKQTTTLETPAKTLAAEAKASDGTIQGNRIGFVSLGCPKNLVDSERILTQLRIDGYEVTNSYDNADLVIVNTCGFIDAAVEESLDAVREALEENGKVIVTGCLGAKENQIREVHPDVLEITGPHSYEAVLNHVHKYVPKPEHNPFTSLIPQTGVKLTPKHYAYLKISEGCDNRCTFCIIPALRGDLDSRGVGSVLDEAKRLVESGVQEILVVSQDTSAYGKDKDGRTDFWNGMPVKQDITSLARQLGKMGAWVRLHYVYPYPWVDDLIPLMAEGLILPYLDLPLQHASPRVLKMMKRPGRVDRQLDAIKKWREICPDLVIRSTFIVGFPGETEEDFEMLLDFLREARLDRVGCFKYSEVDGAVANTLAELISEEVKEDRYERFMEVQAEISAERLARLVGRELDILIDDVDEEGAIGRSYADAPEIDGMVFINGETELTPGDMVRARIVASDEHDLWAELVALED</sequence>
<organism>
    <name type="scientific">Shewanella amazonensis (strain ATCC BAA-1098 / SB2B)</name>
    <dbReference type="NCBI Taxonomy" id="326297"/>
    <lineage>
        <taxon>Bacteria</taxon>
        <taxon>Pseudomonadati</taxon>
        <taxon>Pseudomonadota</taxon>
        <taxon>Gammaproteobacteria</taxon>
        <taxon>Alteromonadales</taxon>
        <taxon>Shewanellaceae</taxon>
        <taxon>Shewanella</taxon>
    </lineage>
</organism>
<keyword id="KW-0004">4Fe-4S</keyword>
<keyword id="KW-0963">Cytoplasm</keyword>
<keyword id="KW-0408">Iron</keyword>
<keyword id="KW-0411">Iron-sulfur</keyword>
<keyword id="KW-0479">Metal-binding</keyword>
<keyword id="KW-1185">Reference proteome</keyword>
<keyword id="KW-0949">S-adenosyl-L-methionine</keyword>
<keyword id="KW-0808">Transferase</keyword>
<reference key="1">
    <citation type="submission" date="2006-12" db="EMBL/GenBank/DDBJ databases">
        <title>Complete sequence of Shewanella amazonensis SB2B.</title>
        <authorList>
            <consortium name="US DOE Joint Genome Institute"/>
            <person name="Copeland A."/>
            <person name="Lucas S."/>
            <person name="Lapidus A."/>
            <person name="Barry K."/>
            <person name="Detter J.C."/>
            <person name="Glavina del Rio T."/>
            <person name="Hammon N."/>
            <person name="Israni S."/>
            <person name="Dalin E."/>
            <person name="Tice H."/>
            <person name="Pitluck S."/>
            <person name="Munk A.C."/>
            <person name="Brettin T."/>
            <person name="Bruce D."/>
            <person name="Han C."/>
            <person name="Tapia R."/>
            <person name="Gilna P."/>
            <person name="Schmutz J."/>
            <person name="Larimer F."/>
            <person name="Land M."/>
            <person name="Hauser L."/>
            <person name="Kyrpides N."/>
            <person name="Mikhailova N."/>
            <person name="Fredrickson J."/>
            <person name="Richardson P."/>
        </authorList>
    </citation>
    <scope>NUCLEOTIDE SEQUENCE [LARGE SCALE GENOMIC DNA]</scope>
    <source>
        <strain>ATCC BAA-1098 / SB2B</strain>
    </source>
</reference>
<comment type="function">
    <text evidence="1">Catalyzes the methylthiolation of an aspartic acid residue of ribosomal protein uS12.</text>
</comment>
<comment type="catalytic activity">
    <reaction evidence="1">
        <text>L-aspartate(89)-[ribosomal protein uS12]-hydrogen + (sulfur carrier)-SH + AH2 + 2 S-adenosyl-L-methionine = 3-methylsulfanyl-L-aspartate(89)-[ribosomal protein uS12]-hydrogen + (sulfur carrier)-H + 5'-deoxyadenosine + L-methionine + A + S-adenosyl-L-homocysteine + 2 H(+)</text>
        <dbReference type="Rhea" id="RHEA:37087"/>
        <dbReference type="Rhea" id="RHEA-COMP:10460"/>
        <dbReference type="Rhea" id="RHEA-COMP:10461"/>
        <dbReference type="Rhea" id="RHEA-COMP:14737"/>
        <dbReference type="Rhea" id="RHEA-COMP:14739"/>
        <dbReference type="ChEBI" id="CHEBI:13193"/>
        <dbReference type="ChEBI" id="CHEBI:15378"/>
        <dbReference type="ChEBI" id="CHEBI:17319"/>
        <dbReference type="ChEBI" id="CHEBI:17499"/>
        <dbReference type="ChEBI" id="CHEBI:29917"/>
        <dbReference type="ChEBI" id="CHEBI:29961"/>
        <dbReference type="ChEBI" id="CHEBI:57844"/>
        <dbReference type="ChEBI" id="CHEBI:57856"/>
        <dbReference type="ChEBI" id="CHEBI:59789"/>
        <dbReference type="ChEBI" id="CHEBI:64428"/>
        <dbReference type="ChEBI" id="CHEBI:73599"/>
        <dbReference type="EC" id="2.8.4.4"/>
    </reaction>
</comment>
<comment type="cofactor">
    <cofactor evidence="1">
        <name>[4Fe-4S] cluster</name>
        <dbReference type="ChEBI" id="CHEBI:49883"/>
    </cofactor>
    <text evidence="1">Binds 2 [4Fe-4S] clusters. One cluster is coordinated with 3 cysteines and an exchangeable S-adenosyl-L-methionine.</text>
</comment>
<comment type="subcellular location">
    <subcellularLocation>
        <location evidence="1">Cytoplasm</location>
    </subcellularLocation>
</comment>
<comment type="similarity">
    <text evidence="1">Belongs to the methylthiotransferase family. RimO subfamily.</text>
</comment>
<comment type="sequence caution" evidence="3">
    <conflict type="erroneous initiation">
        <sequence resource="EMBL-CDS" id="ABL98695"/>
    </conflict>
</comment>
<evidence type="ECO:0000255" key="1">
    <source>
        <dbReference type="HAMAP-Rule" id="MF_01865"/>
    </source>
</evidence>
<evidence type="ECO:0000255" key="2">
    <source>
        <dbReference type="PROSITE-ProRule" id="PRU01266"/>
    </source>
</evidence>
<evidence type="ECO:0000305" key="3"/>
<gene>
    <name evidence="1" type="primary">rimO</name>
    <name type="ordered locus">Sama_0485</name>
</gene>
<name>RIMO_SHEAM</name>
<proteinExistence type="inferred from homology"/>